<proteinExistence type="inferred from homology"/>
<feature type="chain" id="PRO_0000352632" description="D-galactonate dehydratase">
    <location>
        <begin position="1"/>
        <end position="382"/>
    </location>
</feature>
<feature type="active site" description="Proton donor" evidence="1">
    <location>
        <position position="185"/>
    </location>
</feature>
<feature type="active site" description="Proton acceptor" evidence="1">
    <location>
        <position position="285"/>
    </location>
</feature>
<feature type="binding site" evidence="2">
    <location>
        <position position="183"/>
    </location>
    <ligand>
        <name>Mg(2+)</name>
        <dbReference type="ChEBI" id="CHEBI:18420"/>
    </ligand>
</feature>
<feature type="binding site" evidence="2">
    <location>
        <position position="209"/>
    </location>
    <ligand>
        <name>Mg(2+)</name>
        <dbReference type="ChEBI" id="CHEBI:18420"/>
    </ligand>
</feature>
<feature type="binding site" evidence="2">
    <location>
        <position position="235"/>
    </location>
    <ligand>
        <name>Mg(2+)</name>
        <dbReference type="ChEBI" id="CHEBI:18420"/>
    </ligand>
</feature>
<feature type="site" description="Increases basicity of active site His" evidence="2">
    <location>
        <position position="258"/>
    </location>
</feature>
<feature type="site" description="Transition state stabilizer" evidence="2">
    <location>
        <position position="310"/>
    </location>
</feature>
<protein>
    <recommendedName>
        <fullName evidence="2">D-galactonate dehydratase</fullName>
        <shortName evidence="2">GalD</shortName>
        <ecNumber evidence="2">4.2.1.6</ecNumber>
    </recommendedName>
</protein>
<sequence>MKITRLTTYRLPPRWMFLKIETDEGVAGWGEPVIEGRARTVEAAVHELADYLVGQDPRRINDLWQTLYRGGFYRGGPILMSAIAGIDQALWDIKGKVLGVPVYELLGGLVRDRMRTYSWVGGDRPADVIAGMKALQAGGFDHFKLNGCEEMGIIDSARAVDAAVARVAEIRAAFGNTVEFGLDFHGRVSAPMAKVLIRALEPYRPLFIEEPVLAEQAESYARLAAQTHLPIAAGERMFSRFEFKRVLEAGGLAILQPDLSHAGGITECLKIAGMAEAYDVALAPHCPLGPIALAACLHIDFVSWNATLQEQSMGIHYNQGAELLDYVRNKADFALEGGYIRPPRLPGLGVDIDEALVIERSRSAPDWRNPVWRHADGSVAEW</sequence>
<reference key="1">
    <citation type="journal article" date="2002" name="Nature">
        <title>Genome sequence of the plant pathogen Ralstonia solanacearum.</title>
        <authorList>
            <person name="Salanoubat M."/>
            <person name="Genin S."/>
            <person name="Artiguenave F."/>
            <person name="Gouzy J."/>
            <person name="Mangenot S."/>
            <person name="Arlat M."/>
            <person name="Billault A."/>
            <person name="Brottier P."/>
            <person name="Camus J.-C."/>
            <person name="Cattolico L."/>
            <person name="Chandler M."/>
            <person name="Choisne N."/>
            <person name="Claudel-Renard C."/>
            <person name="Cunnac S."/>
            <person name="Demange N."/>
            <person name="Gaspin C."/>
            <person name="Lavie M."/>
            <person name="Moisan A."/>
            <person name="Robert C."/>
            <person name="Saurin W."/>
            <person name="Schiex T."/>
            <person name="Siguier P."/>
            <person name="Thebault P."/>
            <person name="Whalen M."/>
            <person name="Wincker P."/>
            <person name="Levy M."/>
            <person name="Weissenbach J."/>
            <person name="Boucher C.A."/>
        </authorList>
    </citation>
    <scope>NUCLEOTIDE SEQUENCE [LARGE SCALE GENOMIC DNA]</scope>
    <source>
        <strain>ATCC BAA-1114 / GMI1000</strain>
    </source>
</reference>
<gene>
    <name evidence="2" type="primary">dgoD</name>
    <name type="ordered locus">RSc2751</name>
</gene>
<keyword id="KW-0456">Lyase</keyword>
<keyword id="KW-0460">Magnesium</keyword>
<keyword id="KW-0479">Metal-binding</keyword>
<keyword id="KW-1185">Reference proteome</keyword>
<name>DGOD_RALN1</name>
<organism>
    <name type="scientific">Ralstonia nicotianae (strain ATCC BAA-1114 / GMI1000)</name>
    <name type="common">Ralstonia solanacearum</name>
    <dbReference type="NCBI Taxonomy" id="267608"/>
    <lineage>
        <taxon>Bacteria</taxon>
        <taxon>Pseudomonadati</taxon>
        <taxon>Pseudomonadota</taxon>
        <taxon>Betaproteobacteria</taxon>
        <taxon>Burkholderiales</taxon>
        <taxon>Burkholderiaceae</taxon>
        <taxon>Ralstonia</taxon>
        <taxon>Ralstonia solanacearum species complex</taxon>
    </lineage>
</organism>
<evidence type="ECO:0000250" key="1"/>
<evidence type="ECO:0000255" key="2">
    <source>
        <dbReference type="HAMAP-Rule" id="MF_01289"/>
    </source>
</evidence>
<comment type="function">
    <text evidence="2">Catalyzes the dehydration of D-galactonate to 2-keto-3-deoxy-D-galactonate.</text>
</comment>
<comment type="catalytic activity">
    <reaction evidence="2">
        <text>D-galactonate = 2-dehydro-3-deoxy-D-galactonate + H2O</text>
        <dbReference type="Rhea" id="RHEA:18649"/>
        <dbReference type="ChEBI" id="CHEBI:12931"/>
        <dbReference type="ChEBI" id="CHEBI:15377"/>
        <dbReference type="ChEBI" id="CHEBI:57989"/>
        <dbReference type="EC" id="4.2.1.6"/>
    </reaction>
</comment>
<comment type="cofactor">
    <cofactor evidence="2">
        <name>Mg(2+)</name>
        <dbReference type="ChEBI" id="CHEBI:18420"/>
    </cofactor>
    <text evidence="2">Binds 1 Mg(2+) ion per subunit.</text>
</comment>
<comment type="pathway">
    <text evidence="2">Carbohydrate acid metabolism; D-galactonate degradation; D-glyceraldehyde 3-phosphate and pyruvate from D-galactonate: step 1/3.</text>
</comment>
<comment type="miscellaneous">
    <text evidence="2">Reaction proceeds via an anti dehydration.</text>
</comment>
<comment type="similarity">
    <text evidence="2">Belongs to the mandelate racemase/muconate lactonizing enzyme family. GalD subfamily.</text>
</comment>
<accession>Q8XVS8</accession>
<dbReference type="EC" id="4.2.1.6" evidence="2"/>
<dbReference type="EMBL" id="AL646052">
    <property type="protein sequence ID" value="CAD16458.1"/>
    <property type="molecule type" value="Genomic_DNA"/>
</dbReference>
<dbReference type="RefSeq" id="WP_011002658.1">
    <property type="nucleotide sequence ID" value="NC_003295.1"/>
</dbReference>
<dbReference type="SMR" id="Q8XVS8"/>
<dbReference type="STRING" id="267608.RSc2751"/>
<dbReference type="EnsemblBacteria" id="CAD16458">
    <property type="protein sequence ID" value="CAD16458"/>
    <property type="gene ID" value="RSc2751"/>
</dbReference>
<dbReference type="KEGG" id="rso:RSc2751"/>
<dbReference type="eggNOG" id="COG4948">
    <property type="taxonomic scope" value="Bacteria"/>
</dbReference>
<dbReference type="HOGENOM" id="CLU_030273_3_2_4"/>
<dbReference type="UniPathway" id="UPA00081">
    <property type="reaction ID" value="UER00518"/>
</dbReference>
<dbReference type="Proteomes" id="UP000001436">
    <property type="component" value="Chromosome"/>
</dbReference>
<dbReference type="GO" id="GO:0008869">
    <property type="term" value="F:galactonate dehydratase activity"/>
    <property type="evidence" value="ECO:0007669"/>
    <property type="project" value="UniProtKB-UniRule"/>
</dbReference>
<dbReference type="GO" id="GO:0000287">
    <property type="term" value="F:magnesium ion binding"/>
    <property type="evidence" value="ECO:0007669"/>
    <property type="project" value="UniProtKB-UniRule"/>
</dbReference>
<dbReference type="GO" id="GO:0009063">
    <property type="term" value="P:amino acid catabolic process"/>
    <property type="evidence" value="ECO:0007669"/>
    <property type="project" value="InterPro"/>
</dbReference>
<dbReference type="GO" id="GO:0034194">
    <property type="term" value="P:D-galactonate catabolic process"/>
    <property type="evidence" value="ECO:0007669"/>
    <property type="project" value="UniProtKB-UniRule"/>
</dbReference>
<dbReference type="CDD" id="cd03325">
    <property type="entry name" value="D-galactonate_dehydratase"/>
    <property type="match status" value="1"/>
</dbReference>
<dbReference type="FunFam" id="3.30.390.10:FF:000003">
    <property type="entry name" value="D-galactonate dehydratase"/>
    <property type="match status" value="1"/>
</dbReference>
<dbReference type="Gene3D" id="3.20.20.120">
    <property type="entry name" value="Enolase-like C-terminal domain"/>
    <property type="match status" value="1"/>
</dbReference>
<dbReference type="Gene3D" id="3.30.390.10">
    <property type="entry name" value="Enolase-like, N-terminal domain"/>
    <property type="match status" value="1"/>
</dbReference>
<dbReference type="HAMAP" id="MF_01289">
    <property type="entry name" value="Galacton_dehydrat"/>
    <property type="match status" value="1"/>
</dbReference>
<dbReference type="InterPro" id="IPR034593">
    <property type="entry name" value="DgoD-like"/>
</dbReference>
<dbReference type="InterPro" id="IPR036849">
    <property type="entry name" value="Enolase-like_C_sf"/>
</dbReference>
<dbReference type="InterPro" id="IPR029017">
    <property type="entry name" value="Enolase-like_N"/>
</dbReference>
<dbReference type="InterPro" id="IPR029065">
    <property type="entry name" value="Enolase_C-like"/>
</dbReference>
<dbReference type="InterPro" id="IPR023592">
    <property type="entry name" value="Galactonate_deHydtase"/>
</dbReference>
<dbReference type="InterPro" id="IPR018110">
    <property type="entry name" value="Mandel_Rmase/mucon_lact_enz_CS"/>
</dbReference>
<dbReference type="InterPro" id="IPR013342">
    <property type="entry name" value="Mandelate_racemase_C"/>
</dbReference>
<dbReference type="InterPro" id="IPR013341">
    <property type="entry name" value="Mandelate_racemase_N_dom"/>
</dbReference>
<dbReference type="NCBIfam" id="NF010624">
    <property type="entry name" value="PRK14017.1"/>
    <property type="match status" value="1"/>
</dbReference>
<dbReference type="PANTHER" id="PTHR48080:SF2">
    <property type="entry name" value="D-GALACTONATE DEHYDRATASE"/>
    <property type="match status" value="1"/>
</dbReference>
<dbReference type="PANTHER" id="PTHR48080">
    <property type="entry name" value="D-GALACTONATE DEHYDRATASE-RELATED"/>
    <property type="match status" value="1"/>
</dbReference>
<dbReference type="Pfam" id="PF13378">
    <property type="entry name" value="MR_MLE_C"/>
    <property type="match status" value="1"/>
</dbReference>
<dbReference type="Pfam" id="PF02746">
    <property type="entry name" value="MR_MLE_N"/>
    <property type="match status" value="1"/>
</dbReference>
<dbReference type="SFLD" id="SFLDF00003">
    <property type="entry name" value="D-galactonate_dehydratase"/>
    <property type="match status" value="1"/>
</dbReference>
<dbReference type="SFLD" id="SFLDG00179">
    <property type="entry name" value="mandelate_racemase"/>
    <property type="match status" value="1"/>
</dbReference>
<dbReference type="SMART" id="SM00922">
    <property type="entry name" value="MR_MLE"/>
    <property type="match status" value="1"/>
</dbReference>
<dbReference type="SUPFAM" id="SSF51604">
    <property type="entry name" value="Enolase C-terminal domain-like"/>
    <property type="match status" value="1"/>
</dbReference>
<dbReference type="SUPFAM" id="SSF54826">
    <property type="entry name" value="Enolase N-terminal domain-like"/>
    <property type="match status" value="1"/>
</dbReference>
<dbReference type="PROSITE" id="PS00908">
    <property type="entry name" value="MR_MLE_1"/>
    <property type="match status" value="1"/>
</dbReference>
<dbReference type="PROSITE" id="PS00909">
    <property type="entry name" value="MR_MLE_2"/>
    <property type="match status" value="1"/>
</dbReference>